<sequence>MLLHDVAITSMDVAATSSRLTKVARIAALLHRAAPDTQLVTIIVSWLSGELPQRHIGVGWAALRSLPPPAPQPALTVTGVDATLSKIGTLSGKGSQAQRAALVAELFSAATEAEQTFLLRLLGGELRQGAKGGIMADAVAQAAGLPAATVQRAAMLGGDLAAAAAAGLSGAALDTFTLRVGRPIGPMLAQTATSVHDALERHGGTTIFEAKLDGARVQIHRANDQVRIYTRSLDDVTARLPEVVEATLALPVRDLVADGEAIALCPDNRPQRFQVTASRFGRSVDVAAARATQPLSVFFFDILHRDGTDLLEAPTTERLAALDALVPARHRVDRLITSDPTDAANFLDATLAAGHEGVMAKAPAARYLAGRRGAGWLKVKPVHTLDLVVLAVEWGSGRRRGKLSNIHLGARDPATGGFVMVGKTFKGMTDAMLDWQTTRFHEIAVGPTDGYVVQLRPEQVVEVALDGVQRSSRYPGGLALRFARVVRYRADKDPAEADTIDAVRALY</sequence>
<comment type="function">
    <text evidence="1">DNA ligase that seals nicks in double-stranded DNA during DNA replication, DNA recombination and DNA repair.</text>
</comment>
<comment type="catalytic activity">
    <reaction evidence="1">
        <text>ATP + (deoxyribonucleotide)n-3'-hydroxyl + 5'-phospho-(deoxyribonucleotide)m = (deoxyribonucleotide)n+m + AMP + diphosphate.</text>
        <dbReference type="EC" id="6.5.1.1"/>
    </reaction>
</comment>
<comment type="cofactor">
    <cofactor evidence="1">
        <name>Mg(2+)</name>
        <dbReference type="ChEBI" id="CHEBI:18420"/>
    </cofactor>
</comment>
<comment type="similarity">
    <text evidence="1">Belongs to the ATP-dependent DNA ligase family.</text>
</comment>
<gene>
    <name evidence="1" type="primary">lig</name>
    <name type="ordered locus">JTY_3082</name>
</gene>
<accession>C1AGI1</accession>
<name>DNLI_MYCBT</name>
<dbReference type="EC" id="6.5.1.1" evidence="1"/>
<dbReference type="EMBL" id="AP010918">
    <property type="protein sequence ID" value="BAH27360.1"/>
    <property type="molecule type" value="Genomic_DNA"/>
</dbReference>
<dbReference type="RefSeq" id="WP_003415991.1">
    <property type="nucleotide sequence ID" value="NZ_CP014566.1"/>
</dbReference>
<dbReference type="SMR" id="C1AGI1"/>
<dbReference type="KEGG" id="mbt:JTY_3082"/>
<dbReference type="HOGENOM" id="CLU_005138_6_1_11"/>
<dbReference type="GO" id="GO:0005524">
    <property type="term" value="F:ATP binding"/>
    <property type="evidence" value="ECO:0007669"/>
    <property type="project" value="UniProtKB-UniRule"/>
</dbReference>
<dbReference type="GO" id="GO:0003677">
    <property type="term" value="F:DNA binding"/>
    <property type="evidence" value="ECO:0007669"/>
    <property type="project" value="InterPro"/>
</dbReference>
<dbReference type="GO" id="GO:0003910">
    <property type="term" value="F:DNA ligase (ATP) activity"/>
    <property type="evidence" value="ECO:0007669"/>
    <property type="project" value="UniProtKB-UniRule"/>
</dbReference>
<dbReference type="GO" id="GO:0046872">
    <property type="term" value="F:metal ion binding"/>
    <property type="evidence" value="ECO:0007669"/>
    <property type="project" value="UniProtKB-KW"/>
</dbReference>
<dbReference type="GO" id="GO:0051301">
    <property type="term" value="P:cell division"/>
    <property type="evidence" value="ECO:0007669"/>
    <property type="project" value="UniProtKB-KW"/>
</dbReference>
<dbReference type="GO" id="GO:0071897">
    <property type="term" value="P:DNA biosynthetic process"/>
    <property type="evidence" value="ECO:0007669"/>
    <property type="project" value="InterPro"/>
</dbReference>
<dbReference type="GO" id="GO:0006310">
    <property type="term" value="P:DNA recombination"/>
    <property type="evidence" value="ECO:0007669"/>
    <property type="project" value="UniProtKB-UniRule"/>
</dbReference>
<dbReference type="GO" id="GO:0006281">
    <property type="term" value="P:DNA repair"/>
    <property type="evidence" value="ECO:0007669"/>
    <property type="project" value="UniProtKB-UniRule"/>
</dbReference>
<dbReference type="GO" id="GO:0006260">
    <property type="term" value="P:DNA replication"/>
    <property type="evidence" value="ECO:0007669"/>
    <property type="project" value="UniProtKB-UniRule"/>
</dbReference>
<dbReference type="CDD" id="cd07901">
    <property type="entry name" value="Adenylation_DNA_ligase_Arch_LigB"/>
    <property type="match status" value="1"/>
</dbReference>
<dbReference type="CDD" id="cd07972">
    <property type="entry name" value="OBF_DNA_ligase_Arch_LigB"/>
    <property type="match status" value="1"/>
</dbReference>
<dbReference type="FunFam" id="1.10.3260.10:FF:000009">
    <property type="entry name" value="Probable DNA ligase"/>
    <property type="match status" value="1"/>
</dbReference>
<dbReference type="FunFam" id="2.40.50.140:FF:000163">
    <property type="entry name" value="Probable DNA ligase"/>
    <property type="match status" value="1"/>
</dbReference>
<dbReference type="FunFam" id="3.30.470.30:FF:000012">
    <property type="entry name" value="Probable DNA ligase"/>
    <property type="match status" value="1"/>
</dbReference>
<dbReference type="Gene3D" id="1.10.3260.10">
    <property type="entry name" value="DNA ligase, ATP-dependent, N-terminal domain"/>
    <property type="match status" value="1"/>
</dbReference>
<dbReference type="Gene3D" id="3.30.470.30">
    <property type="entry name" value="DNA ligase/mRNA capping enzyme"/>
    <property type="match status" value="1"/>
</dbReference>
<dbReference type="Gene3D" id="2.40.50.140">
    <property type="entry name" value="Nucleic acid-binding proteins"/>
    <property type="match status" value="1"/>
</dbReference>
<dbReference type="HAMAP" id="MF_00407">
    <property type="entry name" value="DNA_ligase"/>
    <property type="match status" value="1"/>
</dbReference>
<dbReference type="InterPro" id="IPR050191">
    <property type="entry name" value="ATP-dep_DNA_ligase"/>
</dbReference>
<dbReference type="InterPro" id="IPR022865">
    <property type="entry name" value="DNA_ligae_ATP-dep_bac/arc"/>
</dbReference>
<dbReference type="InterPro" id="IPR000977">
    <property type="entry name" value="DNA_ligase_ATP-dep"/>
</dbReference>
<dbReference type="InterPro" id="IPR012309">
    <property type="entry name" value="DNA_ligase_ATP-dep_C"/>
</dbReference>
<dbReference type="InterPro" id="IPR012310">
    <property type="entry name" value="DNA_ligase_ATP-dep_cent"/>
</dbReference>
<dbReference type="InterPro" id="IPR016059">
    <property type="entry name" value="DNA_ligase_ATP-dep_CS"/>
</dbReference>
<dbReference type="InterPro" id="IPR012308">
    <property type="entry name" value="DNA_ligase_ATP-dep_N"/>
</dbReference>
<dbReference type="InterPro" id="IPR036599">
    <property type="entry name" value="DNA_ligase_N_sf"/>
</dbReference>
<dbReference type="InterPro" id="IPR012340">
    <property type="entry name" value="NA-bd_OB-fold"/>
</dbReference>
<dbReference type="NCBIfam" id="TIGR00574">
    <property type="entry name" value="dnl1"/>
    <property type="match status" value="1"/>
</dbReference>
<dbReference type="NCBIfam" id="NF002868">
    <property type="entry name" value="PRK03180.1"/>
    <property type="match status" value="1"/>
</dbReference>
<dbReference type="PANTHER" id="PTHR45674">
    <property type="entry name" value="DNA LIGASE 1/3 FAMILY MEMBER"/>
    <property type="match status" value="1"/>
</dbReference>
<dbReference type="PANTHER" id="PTHR45674:SF13">
    <property type="entry name" value="DNA LIGASE-RELATED"/>
    <property type="match status" value="1"/>
</dbReference>
<dbReference type="Pfam" id="PF04679">
    <property type="entry name" value="DNA_ligase_A_C"/>
    <property type="match status" value="1"/>
</dbReference>
<dbReference type="Pfam" id="PF01068">
    <property type="entry name" value="DNA_ligase_A_M"/>
    <property type="match status" value="1"/>
</dbReference>
<dbReference type="Pfam" id="PF04675">
    <property type="entry name" value="DNA_ligase_A_N"/>
    <property type="match status" value="1"/>
</dbReference>
<dbReference type="SUPFAM" id="SSF117018">
    <property type="entry name" value="ATP-dependent DNA ligase DNA-binding domain"/>
    <property type="match status" value="1"/>
</dbReference>
<dbReference type="SUPFAM" id="SSF56091">
    <property type="entry name" value="DNA ligase/mRNA capping enzyme, catalytic domain"/>
    <property type="match status" value="1"/>
</dbReference>
<dbReference type="SUPFAM" id="SSF50249">
    <property type="entry name" value="Nucleic acid-binding proteins"/>
    <property type="match status" value="1"/>
</dbReference>
<dbReference type="PROSITE" id="PS00697">
    <property type="entry name" value="DNA_LIGASE_A1"/>
    <property type="match status" value="1"/>
</dbReference>
<dbReference type="PROSITE" id="PS50160">
    <property type="entry name" value="DNA_LIGASE_A3"/>
    <property type="match status" value="1"/>
</dbReference>
<reference key="1">
    <citation type="journal article" date="2009" name="Vaccine">
        <title>Whole genome sequence analysis of Mycobacterium bovis bacillus Calmette-Guerin (BCG) Tokyo 172: a comparative study of BCG vaccine substrains.</title>
        <authorList>
            <person name="Seki M."/>
            <person name="Honda I."/>
            <person name="Fujita I."/>
            <person name="Yano I."/>
            <person name="Yamamoto S."/>
            <person name="Koyama A."/>
        </authorList>
    </citation>
    <scope>NUCLEOTIDE SEQUENCE [LARGE SCALE GENOMIC DNA]</scope>
    <source>
        <strain>BCG / Tokyo 172 / ATCC 35737 / TMC 1019</strain>
    </source>
</reference>
<protein>
    <recommendedName>
        <fullName evidence="1">Probable DNA ligase</fullName>
        <ecNumber evidence="1">6.5.1.1</ecNumber>
    </recommendedName>
    <alternativeName>
        <fullName evidence="1">Polydeoxyribonucleotide synthase [ATP]</fullName>
    </alternativeName>
</protein>
<evidence type="ECO:0000255" key="1">
    <source>
        <dbReference type="HAMAP-Rule" id="MF_00407"/>
    </source>
</evidence>
<organism>
    <name type="scientific">Mycobacterium bovis (strain BCG / Tokyo 172 / ATCC 35737 / TMC 1019)</name>
    <dbReference type="NCBI Taxonomy" id="561275"/>
    <lineage>
        <taxon>Bacteria</taxon>
        <taxon>Bacillati</taxon>
        <taxon>Actinomycetota</taxon>
        <taxon>Actinomycetes</taxon>
        <taxon>Mycobacteriales</taxon>
        <taxon>Mycobacteriaceae</taxon>
        <taxon>Mycobacterium</taxon>
        <taxon>Mycobacterium tuberculosis complex</taxon>
    </lineage>
</organism>
<proteinExistence type="inferred from homology"/>
<keyword id="KW-0067">ATP-binding</keyword>
<keyword id="KW-0131">Cell cycle</keyword>
<keyword id="KW-0132">Cell division</keyword>
<keyword id="KW-0227">DNA damage</keyword>
<keyword id="KW-0233">DNA recombination</keyword>
<keyword id="KW-0234">DNA repair</keyword>
<keyword id="KW-0235">DNA replication</keyword>
<keyword id="KW-0436">Ligase</keyword>
<keyword id="KW-0460">Magnesium</keyword>
<keyword id="KW-0479">Metal-binding</keyword>
<keyword id="KW-0547">Nucleotide-binding</keyword>
<feature type="chain" id="PRO_1000134729" description="Probable DNA ligase">
    <location>
        <begin position="1"/>
        <end position="507"/>
    </location>
</feature>
<feature type="active site" description="N6-AMP-lysine intermediate" evidence="1">
    <location>
        <position position="211"/>
    </location>
</feature>
<feature type="binding site" evidence="1">
    <location>
        <position position="209"/>
    </location>
    <ligand>
        <name>ATP</name>
        <dbReference type="ChEBI" id="CHEBI:30616"/>
    </ligand>
</feature>
<feature type="binding site" evidence="1">
    <location>
        <position position="216"/>
    </location>
    <ligand>
        <name>ATP</name>
        <dbReference type="ChEBI" id="CHEBI:30616"/>
    </ligand>
</feature>
<feature type="binding site" evidence="1">
    <location>
        <position position="231"/>
    </location>
    <ligand>
        <name>ATP</name>
        <dbReference type="ChEBI" id="CHEBI:30616"/>
    </ligand>
</feature>
<feature type="binding site" evidence="1">
    <location>
        <position position="260"/>
    </location>
    <ligand>
        <name>ATP</name>
        <dbReference type="ChEBI" id="CHEBI:30616"/>
    </ligand>
</feature>
<feature type="binding site" evidence="1">
    <location>
        <position position="300"/>
    </location>
    <ligand>
        <name>ATP</name>
        <dbReference type="ChEBI" id="CHEBI:30616"/>
    </ligand>
</feature>
<feature type="binding site" evidence="1">
    <location>
        <position position="372"/>
    </location>
    <ligand>
        <name>ATP</name>
        <dbReference type="ChEBI" id="CHEBI:30616"/>
    </ligand>
</feature>
<feature type="binding site" evidence="1">
    <location>
        <position position="378"/>
    </location>
    <ligand>
        <name>ATP</name>
        <dbReference type="ChEBI" id="CHEBI:30616"/>
    </ligand>
</feature>